<sequence>MSIEAEALLQEAKESIEAAQNYRSELQQRLHGLSQARKQVRGSASQTRKALQRHFQELQTAVSRLLIDRLNGLLQEVDNIELDSVSPLDDCQKLIEHGVSTADELLREGEAAIRCSINETEDKLGSFTKKALQIQLDSLPEVPSLVDVPCLSAQLDDSLLHMFRAHVARHGSVASHPPVQIEELVERPGGVLVRWCKVDDDFSPQDYRLQFRRSNSSQYEDAYIGKDTEFLVLHLDPHVDHLFRVCARGEGRTEWSPWSIPQTGYTTLAPHEWCPGVDGYILSSRKNIAMRSDSSAPGHGGVLYSNSPTYFCGQTLTFKITAAGQTDKRDSLGVCADSRTDTDSLQRDQAVCISTNGAVFVNGKEMTNQLPAITVGSSVTFDMEVVSLFPVNNNNPSDGGNFKLRVTIGSGNREVVFDWLLDQVLDSLFFGCSFTHPGWKVLVF</sequence>
<evidence type="ECO:0000250" key="1"/>
<evidence type="ECO:0000255" key="2"/>
<evidence type="ECO:0000255" key="3">
    <source>
        <dbReference type="PROSITE-ProRule" id="PRU00316"/>
    </source>
</evidence>
<evidence type="ECO:0000305" key="4"/>
<gene>
    <name type="primary">crlf3</name>
    <name type="synonym">clf-3</name>
    <name type="ORF">zgc:110212</name>
</gene>
<reference key="1">
    <citation type="journal article" date="2007" name="BMC Evol. Biol.">
        <title>Evolution of Class I cytokine receptors.</title>
        <authorList>
            <person name="Liongue C."/>
            <person name="Ward A.C."/>
        </authorList>
    </citation>
    <scope>NUCLEOTIDE SEQUENCE [MRNA]</scope>
</reference>
<reference key="2">
    <citation type="submission" date="2005-04" db="EMBL/GenBank/DDBJ databases">
        <authorList>
            <consortium name="NIH - Zebrafish Gene Collection (ZGC) project"/>
        </authorList>
    </citation>
    <scope>NUCLEOTIDE SEQUENCE [LARGE SCALE MRNA]</scope>
    <source>
        <strain>AB</strain>
        <tissue>Embryo</tissue>
    </source>
</reference>
<organism>
    <name type="scientific">Danio rerio</name>
    <name type="common">Zebrafish</name>
    <name type="synonym">Brachydanio rerio</name>
    <dbReference type="NCBI Taxonomy" id="7955"/>
    <lineage>
        <taxon>Eukaryota</taxon>
        <taxon>Metazoa</taxon>
        <taxon>Chordata</taxon>
        <taxon>Craniata</taxon>
        <taxon>Vertebrata</taxon>
        <taxon>Euteleostomi</taxon>
        <taxon>Actinopterygii</taxon>
        <taxon>Neopterygii</taxon>
        <taxon>Teleostei</taxon>
        <taxon>Ostariophysi</taxon>
        <taxon>Cypriniformes</taxon>
        <taxon>Danionidae</taxon>
        <taxon>Danioninae</taxon>
        <taxon>Danio</taxon>
    </lineage>
</organism>
<comment type="function">
    <text evidence="1">May play a role in the negative regulation of cell cycle progression.</text>
</comment>
<comment type="subcellular location">
    <subcellularLocation>
        <location evidence="1">Cytoplasm</location>
    </subcellularLocation>
</comment>
<comment type="similarity">
    <text evidence="4">Belongs to the cytokine receptor-like factor 3 family.</text>
</comment>
<keyword id="KW-0175">Coiled coil</keyword>
<keyword id="KW-0963">Cytoplasm</keyword>
<keyword id="KW-1185">Reference proteome</keyword>
<feature type="chain" id="PRO_0000288938" description="Cytokine receptor-like factor 3">
    <location>
        <begin position="1"/>
        <end position="444"/>
    </location>
</feature>
<feature type="domain" description="Fibronectin type-III" evidence="3">
    <location>
        <begin position="177"/>
        <end position="270"/>
    </location>
</feature>
<feature type="coiled-coil region" evidence="2">
    <location>
        <begin position="1"/>
        <end position="65"/>
    </location>
</feature>
<feature type="sequence conflict" description="In Ref. 1; CAJ80719." evidence="4" ref="1">
    <original>K</original>
    <variation>E</variation>
    <location>
        <position position="49"/>
    </location>
</feature>
<feature type="sequence conflict" description="In Ref. 2; AAH90429." evidence="4" ref="2">
    <original>R</original>
    <variation>G</variation>
    <location>
        <position position="187"/>
    </location>
</feature>
<feature type="sequence conflict" description="In Ref. 1; CAJ80719." evidence="4" ref="1">
    <original>A</original>
    <variation>D</variation>
    <location>
        <position position="323"/>
    </location>
</feature>
<feature type="sequence conflict" description="In Ref. 1; CAJ80719." evidence="4" ref="1">
    <original>V</original>
    <variation>M</variation>
    <location>
        <position position="385"/>
    </location>
</feature>
<name>CRLF3_DANRE</name>
<accession>Q568M3</accession>
<accession>A8Y6W7</accession>
<accession>Q5BLI0</accession>
<proteinExistence type="evidence at transcript level"/>
<dbReference type="EMBL" id="AM233512">
    <property type="protein sequence ID" value="CAJ80719.1"/>
    <property type="molecule type" value="mRNA"/>
</dbReference>
<dbReference type="EMBL" id="BC090429">
    <property type="protein sequence ID" value="AAH90429.1"/>
    <property type="molecule type" value="mRNA"/>
</dbReference>
<dbReference type="EMBL" id="BC092800">
    <property type="protein sequence ID" value="AAH92800.1"/>
    <property type="molecule type" value="mRNA"/>
</dbReference>
<dbReference type="SMR" id="Q568M3"/>
<dbReference type="FunCoup" id="Q568M3">
    <property type="interactions" value="1895"/>
</dbReference>
<dbReference type="STRING" id="7955.ENSDARP00000070383"/>
<dbReference type="PaxDb" id="7955-ENSDARP00000070383"/>
<dbReference type="AGR" id="ZFIN:ZDB-GENE-050417-354"/>
<dbReference type="ZFIN" id="ZDB-GENE-050417-354">
    <property type="gene designation" value="crlf3"/>
</dbReference>
<dbReference type="eggNOG" id="ENOG502QQI2">
    <property type="taxonomic scope" value="Eukaryota"/>
</dbReference>
<dbReference type="InParanoid" id="Q568M3"/>
<dbReference type="PhylomeDB" id="Q568M3"/>
<dbReference type="PRO" id="PR:Q568M3"/>
<dbReference type="Proteomes" id="UP000000437">
    <property type="component" value="Unplaced"/>
</dbReference>
<dbReference type="GO" id="GO:0005737">
    <property type="term" value="C:cytoplasm"/>
    <property type="evidence" value="ECO:0007669"/>
    <property type="project" value="UniProtKB-SubCell"/>
</dbReference>
<dbReference type="GO" id="GO:0005634">
    <property type="term" value="C:nucleus"/>
    <property type="evidence" value="ECO:0000318"/>
    <property type="project" value="GO_Central"/>
</dbReference>
<dbReference type="GO" id="GO:0003677">
    <property type="term" value="F:DNA binding"/>
    <property type="evidence" value="ECO:0000318"/>
    <property type="project" value="GO_Central"/>
</dbReference>
<dbReference type="CDD" id="cd00063">
    <property type="entry name" value="FN3"/>
    <property type="match status" value="1"/>
</dbReference>
<dbReference type="FunFam" id="2.60.40.10:FF:000573">
    <property type="entry name" value="Cytokine receptor-like factor 3"/>
    <property type="match status" value="1"/>
</dbReference>
<dbReference type="Gene3D" id="2.60.40.10">
    <property type="entry name" value="Immunoglobulins"/>
    <property type="match status" value="1"/>
</dbReference>
<dbReference type="InterPro" id="IPR003961">
    <property type="entry name" value="FN3_dom"/>
</dbReference>
<dbReference type="InterPro" id="IPR036116">
    <property type="entry name" value="FN3_sf"/>
</dbReference>
<dbReference type="InterPro" id="IPR013783">
    <property type="entry name" value="Ig-like_fold"/>
</dbReference>
<dbReference type="SUPFAM" id="SSF49265">
    <property type="entry name" value="Fibronectin type III"/>
    <property type="match status" value="1"/>
</dbReference>
<dbReference type="PROSITE" id="PS50853">
    <property type="entry name" value="FN3"/>
    <property type="match status" value="1"/>
</dbReference>
<protein>
    <recommendedName>
        <fullName>Cytokine receptor-like factor 3</fullName>
        <shortName>Clf-3 protein</shortName>
    </recommendedName>
</protein>